<feature type="chain" id="PRO_1000147274" description="Cell division protein CrgA">
    <location>
        <begin position="1"/>
        <end position="91"/>
    </location>
</feature>
<feature type="transmembrane region" description="Helical" evidence="1">
    <location>
        <begin position="38"/>
        <end position="58"/>
    </location>
</feature>
<feature type="transmembrane region" description="Helical" evidence="1">
    <location>
        <begin position="68"/>
        <end position="88"/>
    </location>
</feature>
<feature type="region of interest" description="Disordered" evidence="2">
    <location>
        <begin position="1"/>
        <end position="28"/>
    </location>
</feature>
<feature type="compositionally biased region" description="Polar residues" evidence="2">
    <location>
        <begin position="1"/>
        <end position="24"/>
    </location>
</feature>
<protein>
    <recommendedName>
        <fullName evidence="1">Cell division protein CrgA</fullName>
    </recommendedName>
</protein>
<reference key="1">
    <citation type="journal article" date="2010" name="BMC Genomics">
        <title>Complete genome sequence and lifestyle of black-pigmented Corynebacterium aurimucosum ATCC 700975 (formerly C. nigricans CN-1) isolated from a vaginal swab of a woman with spontaneous abortion.</title>
        <authorList>
            <person name="Trost E."/>
            <person name="Gotker S."/>
            <person name="Schneider J."/>
            <person name="Schneiker-Bekel S."/>
            <person name="Szczepanowski R."/>
            <person name="Tilker A."/>
            <person name="Viehoever P."/>
            <person name="Arnold W."/>
            <person name="Bekel T."/>
            <person name="Blom J."/>
            <person name="Gartemann K.H."/>
            <person name="Linke B."/>
            <person name="Goesmann A."/>
            <person name="Puhler A."/>
            <person name="Shukla S.K."/>
            <person name="Tauch A."/>
        </authorList>
    </citation>
    <scope>NUCLEOTIDE SEQUENCE [LARGE SCALE GENOMIC DNA]</scope>
    <source>
        <strain>ATCC 700975 / DSM 44827 / CIP 107346 / CN-1</strain>
    </source>
</reference>
<proteinExistence type="inferred from homology"/>
<accession>C3PE99</accession>
<dbReference type="EMBL" id="CP001601">
    <property type="protein sequence ID" value="ACP31627.1"/>
    <property type="molecule type" value="Genomic_DNA"/>
</dbReference>
<dbReference type="RefSeq" id="WP_010188168.1">
    <property type="nucleotide sequence ID" value="NZ_ACLH01000031.1"/>
</dbReference>
<dbReference type="SMR" id="C3PE99"/>
<dbReference type="STRING" id="548476.cauri_0028"/>
<dbReference type="GeneID" id="31922657"/>
<dbReference type="KEGG" id="car:cauri_0028"/>
<dbReference type="eggNOG" id="ENOG5032ZHR">
    <property type="taxonomic scope" value="Bacteria"/>
</dbReference>
<dbReference type="HOGENOM" id="CLU_149126_2_0_11"/>
<dbReference type="OrthoDB" id="5189646at2"/>
<dbReference type="Proteomes" id="UP000002077">
    <property type="component" value="Chromosome"/>
</dbReference>
<dbReference type="GO" id="GO:0005886">
    <property type="term" value="C:plasma membrane"/>
    <property type="evidence" value="ECO:0007669"/>
    <property type="project" value="UniProtKB-SubCell"/>
</dbReference>
<dbReference type="GO" id="GO:0051301">
    <property type="term" value="P:cell division"/>
    <property type="evidence" value="ECO:0007669"/>
    <property type="project" value="UniProtKB-UniRule"/>
</dbReference>
<dbReference type="HAMAP" id="MF_00631">
    <property type="entry name" value="CrgA"/>
    <property type="match status" value="1"/>
</dbReference>
<dbReference type="InterPro" id="IPR009619">
    <property type="entry name" value="CrgA"/>
</dbReference>
<dbReference type="NCBIfam" id="NF001194">
    <property type="entry name" value="PRK00159.1"/>
    <property type="match status" value="1"/>
</dbReference>
<dbReference type="Pfam" id="PF06781">
    <property type="entry name" value="CrgA"/>
    <property type="match status" value="1"/>
</dbReference>
<evidence type="ECO:0000255" key="1">
    <source>
        <dbReference type="HAMAP-Rule" id="MF_00631"/>
    </source>
</evidence>
<evidence type="ECO:0000256" key="2">
    <source>
        <dbReference type="SAM" id="MobiDB-lite"/>
    </source>
</evidence>
<gene>
    <name evidence="1" type="primary">crgA</name>
    <name type="ordered locus">cauri_0028</name>
</gene>
<keyword id="KW-0131">Cell cycle</keyword>
<keyword id="KW-0132">Cell division</keyword>
<keyword id="KW-1003">Cell membrane</keyword>
<keyword id="KW-0472">Membrane</keyword>
<keyword id="KW-1185">Reference proteome</keyword>
<keyword id="KW-0812">Transmembrane</keyword>
<keyword id="KW-1133">Transmembrane helix</keyword>
<sequence length="91" mass="9931">MPKSKITTEGSALPQSSSSATNRTPVKINSEGTPKWYIAIMLGLMLLGLLWLVVNYLAGESIPFMQELGPWNYGIGFGLAIIGLLMTMGWR</sequence>
<comment type="function">
    <text evidence="1">Involved in cell division.</text>
</comment>
<comment type="subcellular location">
    <subcellularLocation>
        <location evidence="1">Cell membrane</location>
        <topology evidence="1">Multi-pass membrane protein</topology>
    </subcellularLocation>
</comment>
<comment type="similarity">
    <text evidence="1">Belongs to the CrgA family.</text>
</comment>
<organism>
    <name type="scientific">Corynebacterium aurimucosum (strain ATCC 700975 / DSM 44827 / CIP 107346 / CN-1)</name>
    <name type="common">Corynebacterium nigricans</name>
    <dbReference type="NCBI Taxonomy" id="548476"/>
    <lineage>
        <taxon>Bacteria</taxon>
        <taxon>Bacillati</taxon>
        <taxon>Actinomycetota</taxon>
        <taxon>Actinomycetes</taxon>
        <taxon>Mycobacteriales</taxon>
        <taxon>Corynebacteriaceae</taxon>
        <taxon>Corynebacterium</taxon>
    </lineage>
</organism>
<name>CRGA_CORA7</name>